<reference key="1">
    <citation type="journal article" date="2008" name="Genome Res.">
        <title>Genome sequence of the beta-rhizobium Cupriavidus taiwanensis and comparative genomics of rhizobia.</title>
        <authorList>
            <person name="Amadou C."/>
            <person name="Pascal G."/>
            <person name="Mangenot S."/>
            <person name="Glew M."/>
            <person name="Bontemps C."/>
            <person name="Capela D."/>
            <person name="Carrere S."/>
            <person name="Cruveiller S."/>
            <person name="Dossat C."/>
            <person name="Lajus A."/>
            <person name="Marchetti M."/>
            <person name="Poinsot V."/>
            <person name="Rouy Z."/>
            <person name="Servin B."/>
            <person name="Saad M."/>
            <person name="Schenowitz C."/>
            <person name="Barbe V."/>
            <person name="Batut J."/>
            <person name="Medigue C."/>
            <person name="Masson-Boivin C."/>
        </authorList>
    </citation>
    <scope>NUCLEOTIDE SEQUENCE [LARGE SCALE GENOMIC DNA]</scope>
    <source>
        <strain>DSM 17343 / BCRC 17206 / CCUG 44338 / CIP 107171 / LMG 19424 / R1</strain>
    </source>
</reference>
<sequence length="344" mass="36647">MLNALYPLFRPALFSMDAEDAHHFTLNNLLRAHRMGLGSCIGNRIAEDPHTVMGVRFPNPVGLAAGLDKDGAYIDGLAALGFGFIEVGTVTPRAQPGNPRPRMFRLPQADALINRMGFNNGGVDAFVANVRASRWKAEGGVLGLNIGKNADTPIERANDDYLYCLERVYPHASYVTVNISSPNTKNLRQLQGASELDSLLSSLKDAQQRLADQHKRYVPLALKIAPDLDADQIGNIGDALVRHKIDGVIATNTTISREAVKGLPHAEEAGGLSGRPVFEASTRVVRALRGVVGDAVPVIGVGGIFGGADARAKIEAGASLVQLYSGLIYRGPALVRECAAALRG</sequence>
<name>PYRD_CUPTR</name>
<keyword id="KW-1003">Cell membrane</keyword>
<keyword id="KW-0285">Flavoprotein</keyword>
<keyword id="KW-0288">FMN</keyword>
<keyword id="KW-0472">Membrane</keyword>
<keyword id="KW-0560">Oxidoreductase</keyword>
<keyword id="KW-0665">Pyrimidine biosynthesis</keyword>
<feature type="chain" id="PRO_1000100258" description="Dihydroorotate dehydrogenase (quinone)">
    <location>
        <begin position="1"/>
        <end position="344"/>
    </location>
</feature>
<feature type="active site" description="Nucleophile" evidence="1">
    <location>
        <position position="181"/>
    </location>
</feature>
<feature type="binding site" evidence="1">
    <location>
        <begin position="65"/>
        <end position="69"/>
    </location>
    <ligand>
        <name>FMN</name>
        <dbReference type="ChEBI" id="CHEBI:58210"/>
    </ligand>
</feature>
<feature type="binding site" evidence="1">
    <location>
        <position position="69"/>
    </location>
    <ligand>
        <name>substrate</name>
    </ligand>
</feature>
<feature type="binding site" evidence="1">
    <location>
        <position position="89"/>
    </location>
    <ligand>
        <name>FMN</name>
        <dbReference type="ChEBI" id="CHEBI:58210"/>
    </ligand>
</feature>
<feature type="binding site" evidence="1">
    <location>
        <begin position="114"/>
        <end position="118"/>
    </location>
    <ligand>
        <name>substrate</name>
    </ligand>
</feature>
<feature type="binding site" evidence="1">
    <location>
        <position position="145"/>
    </location>
    <ligand>
        <name>FMN</name>
        <dbReference type="ChEBI" id="CHEBI:58210"/>
    </ligand>
</feature>
<feature type="binding site" evidence="1">
    <location>
        <position position="178"/>
    </location>
    <ligand>
        <name>FMN</name>
        <dbReference type="ChEBI" id="CHEBI:58210"/>
    </ligand>
</feature>
<feature type="binding site" evidence="1">
    <location>
        <position position="178"/>
    </location>
    <ligand>
        <name>substrate</name>
    </ligand>
</feature>
<feature type="binding site" evidence="1">
    <location>
        <position position="183"/>
    </location>
    <ligand>
        <name>substrate</name>
    </ligand>
</feature>
<feature type="binding site" evidence="1">
    <location>
        <position position="223"/>
    </location>
    <ligand>
        <name>FMN</name>
        <dbReference type="ChEBI" id="CHEBI:58210"/>
    </ligand>
</feature>
<feature type="binding site" evidence="1">
    <location>
        <position position="251"/>
    </location>
    <ligand>
        <name>FMN</name>
        <dbReference type="ChEBI" id="CHEBI:58210"/>
    </ligand>
</feature>
<feature type="binding site" evidence="1">
    <location>
        <begin position="252"/>
        <end position="253"/>
    </location>
    <ligand>
        <name>substrate</name>
    </ligand>
</feature>
<feature type="binding site" evidence="1">
    <location>
        <position position="274"/>
    </location>
    <ligand>
        <name>FMN</name>
        <dbReference type="ChEBI" id="CHEBI:58210"/>
    </ligand>
</feature>
<feature type="binding site" evidence="1">
    <location>
        <position position="303"/>
    </location>
    <ligand>
        <name>FMN</name>
        <dbReference type="ChEBI" id="CHEBI:58210"/>
    </ligand>
</feature>
<feature type="binding site" evidence="1">
    <location>
        <begin position="324"/>
        <end position="325"/>
    </location>
    <ligand>
        <name>FMN</name>
        <dbReference type="ChEBI" id="CHEBI:58210"/>
    </ligand>
</feature>
<accession>B3R4T0</accession>
<organism>
    <name type="scientific">Cupriavidus taiwanensis (strain DSM 17343 / BCRC 17206 / CCUG 44338 / CIP 107171 / LMG 19424 / R1)</name>
    <name type="common">Ralstonia taiwanensis (strain LMG 19424)</name>
    <dbReference type="NCBI Taxonomy" id="977880"/>
    <lineage>
        <taxon>Bacteria</taxon>
        <taxon>Pseudomonadati</taxon>
        <taxon>Pseudomonadota</taxon>
        <taxon>Betaproteobacteria</taxon>
        <taxon>Burkholderiales</taxon>
        <taxon>Burkholderiaceae</taxon>
        <taxon>Cupriavidus</taxon>
    </lineage>
</organism>
<dbReference type="EC" id="1.3.5.2" evidence="1"/>
<dbReference type="EMBL" id="CU633749">
    <property type="protein sequence ID" value="CAQ69273.1"/>
    <property type="molecule type" value="Genomic_DNA"/>
</dbReference>
<dbReference type="RefSeq" id="WP_012352599.1">
    <property type="nucleotide sequence ID" value="NC_010528.1"/>
</dbReference>
<dbReference type="SMR" id="B3R4T0"/>
<dbReference type="GeneID" id="29760328"/>
<dbReference type="KEGG" id="cti:RALTA_A1314"/>
<dbReference type="eggNOG" id="COG0167">
    <property type="taxonomic scope" value="Bacteria"/>
</dbReference>
<dbReference type="HOGENOM" id="CLU_013640_2_0_4"/>
<dbReference type="BioCyc" id="CTAI977880:RALTA_RS06295-MONOMER"/>
<dbReference type="UniPathway" id="UPA00070">
    <property type="reaction ID" value="UER00946"/>
</dbReference>
<dbReference type="Proteomes" id="UP000001692">
    <property type="component" value="Chromosome 1"/>
</dbReference>
<dbReference type="GO" id="GO:0005737">
    <property type="term" value="C:cytoplasm"/>
    <property type="evidence" value="ECO:0007669"/>
    <property type="project" value="InterPro"/>
</dbReference>
<dbReference type="GO" id="GO:0005886">
    <property type="term" value="C:plasma membrane"/>
    <property type="evidence" value="ECO:0007669"/>
    <property type="project" value="UniProtKB-SubCell"/>
</dbReference>
<dbReference type="GO" id="GO:0106430">
    <property type="term" value="F:dihydroorotate dehydrogenase (quinone) activity"/>
    <property type="evidence" value="ECO:0007669"/>
    <property type="project" value="UniProtKB-EC"/>
</dbReference>
<dbReference type="GO" id="GO:0006207">
    <property type="term" value="P:'de novo' pyrimidine nucleobase biosynthetic process"/>
    <property type="evidence" value="ECO:0007669"/>
    <property type="project" value="InterPro"/>
</dbReference>
<dbReference type="GO" id="GO:0044205">
    <property type="term" value="P:'de novo' UMP biosynthetic process"/>
    <property type="evidence" value="ECO:0007669"/>
    <property type="project" value="UniProtKB-UniRule"/>
</dbReference>
<dbReference type="CDD" id="cd04738">
    <property type="entry name" value="DHOD_2_like"/>
    <property type="match status" value="1"/>
</dbReference>
<dbReference type="FunFam" id="3.20.20.70:FF:000028">
    <property type="entry name" value="Dihydroorotate dehydrogenase (quinone)"/>
    <property type="match status" value="1"/>
</dbReference>
<dbReference type="Gene3D" id="3.20.20.70">
    <property type="entry name" value="Aldolase class I"/>
    <property type="match status" value="1"/>
</dbReference>
<dbReference type="HAMAP" id="MF_00225">
    <property type="entry name" value="DHO_dh_type2"/>
    <property type="match status" value="1"/>
</dbReference>
<dbReference type="InterPro" id="IPR013785">
    <property type="entry name" value="Aldolase_TIM"/>
</dbReference>
<dbReference type="InterPro" id="IPR050074">
    <property type="entry name" value="DHO_dehydrogenase"/>
</dbReference>
<dbReference type="InterPro" id="IPR012135">
    <property type="entry name" value="Dihydroorotate_DH_1_2"/>
</dbReference>
<dbReference type="InterPro" id="IPR005719">
    <property type="entry name" value="Dihydroorotate_DH_2"/>
</dbReference>
<dbReference type="InterPro" id="IPR005720">
    <property type="entry name" value="Dihydroorotate_DH_cat"/>
</dbReference>
<dbReference type="InterPro" id="IPR001295">
    <property type="entry name" value="Dihydroorotate_DH_CS"/>
</dbReference>
<dbReference type="NCBIfam" id="NF003644">
    <property type="entry name" value="PRK05286.1-1"/>
    <property type="match status" value="1"/>
</dbReference>
<dbReference type="NCBIfam" id="NF003645">
    <property type="entry name" value="PRK05286.1-2"/>
    <property type="match status" value="1"/>
</dbReference>
<dbReference type="NCBIfam" id="NF003646">
    <property type="entry name" value="PRK05286.1-4"/>
    <property type="match status" value="1"/>
</dbReference>
<dbReference type="NCBIfam" id="NF003652">
    <property type="entry name" value="PRK05286.2-5"/>
    <property type="match status" value="1"/>
</dbReference>
<dbReference type="NCBIfam" id="TIGR01036">
    <property type="entry name" value="pyrD_sub2"/>
    <property type="match status" value="1"/>
</dbReference>
<dbReference type="PANTHER" id="PTHR48109:SF4">
    <property type="entry name" value="DIHYDROOROTATE DEHYDROGENASE (QUINONE), MITOCHONDRIAL"/>
    <property type="match status" value="1"/>
</dbReference>
<dbReference type="PANTHER" id="PTHR48109">
    <property type="entry name" value="DIHYDROOROTATE DEHYDROGENASE (QUINONE), MITOCHONDRIAL-RELATED"/>
    <property type="match status" value="1"/>
</dbReference>
<dbReference type="Pfam" id="PF01180">
    <property type="entry name" value="DHO_dh"/>
    <property type="match status" value="1"/>
</dbReference>
<dbReference type="PIRSF" id="PIRSF000164">
    <property type="entry name" value="DHO_oxidase"/>
    <property type="match status" value="1"/>
</dbReference>
<dbReference type="SUPFAM" id="SSF51395">
    <property type="entry name" value="FMN-linked oxidoreductases"/>
    <property type="match status" value="1"/>
</dbReference>
<dbReference type="PROSITE" id="PS00911">
    <property type="entry name" value="DHODEHASE_1"/>
    <property type="match status" value="1"/>
</dbReference>
<dbReference type="PROSITE" id="PS00912">
    <property type="entry name" value="DHODEHASE_2"/>
    <property type="match status" value="1"/>
</dbReference>
<comment type="function">
    <text evidence="1">Catalyzes the conversion of dihydroorotate to orotate with quinone as electron acceptor.</text>
</comment>
<comment type="catalytic activity">
    <reaction evidence="1">
        <text>(S)-dihydroorotate + a quinone = orotate + a quinol</text>
        <dbReference type="Rhea" id="RHEA:30187"/>
        <dbReference type="ChEBI" id="CHEBI:24646"/>
        <dbReference type="ChEBI" id="CHEBI:30839"/>
        <dbReference type="ChEBI" id="CHEBI:30864"/>
        <dbReference type="ChEBI" id="CHEBI:132124"/>
        <dbReference type="EC" id="1.3.5.2"/>
    </reaction>
</comment>
<comment type="cofactor">
    <cofactor evidence="1">
        <name>FMN</name>
        <dbReference type="ChEBI" id="CHEBI:58210"/>
    </cofactor>
    <text evidence="1">Binds 1 FMN per subunit.</text>
</comment>
<comment type="pathway">
    <text evidence="1">Pyrimidine metabolism; UMP biosynthesis via de novo pathway; orotate from (S)-dihydroorotate (quinone route): step 1/1.</text>
</comment>
<comment type="subunit">
    <text evidence="1">Monomer.</text>
</comment>
<comment type="subcellular location">
    <subcellularLocation>
        <location evidence="1">Cell membrane</location>
        <topology evidence="1">Peripheral membrane protein</topology>
    </subcellularLocation>
</comment>
<comment type="similarity">
    <text evidence="1">Belongs to the dihydroorotate dehydrogenase family. Type 2 subfamily.</text>
</comment>
<protein>
    <recommendedName>
        <fullName evidence="1">Dihydroorotate dehydrogenase (quinone)</fullName>
        <ecNumber evidence="1">1.3.5.2</ecNumber>
    </recommendedName>
    <alternativeName>
        <fullName evidence="1">DHOdehase</fullName>
        <shortName evidence="1">DHOD</shortName>
        <shortName evidence="1">DHODase</shortName>
    </alternativeName>
    <alternativeName>
        <fullName evidence="1">Dihydroorotate oxidase</fullName>
    </alternativeName>
</protein>
<gene>
    <name evidence="1" type="primary">pyrD</name>
    <name type="ordered locus">RALTA_A1314</name>
</gene>
<evidence type="ECO:0000255" key="1">
    <source>
        <dbReference type="HAMAP-Rule" id="MF_00225"/>
    </source>
</evidence>
<proteinExistence type="inferred from homology"/>